<keyword id="KW-0067">ATP-binding</keyword>
<keyword id="KW-0418">Kinase</keyword>
<keyword id="KW-0460">Magnesium</keyword>
<keyword id="KW-0479">Metal-binding</keyword>
<keyword id="KW-0511">Multifunctional enzyme</keyword>
<keyword id="KW-0547">Nucleotide-binding</keyword>
<keyword id="KW-1185">Reference proteome</keyword>
<keyword id="KW-0723">Serine/threonine-protein kinase</keyword>
<keyword id="KW-0808">Transferase</keyword>
<organism>
    <name type="scientific">Burkholderia multivorans (strain ATCC 17616 / 249)</name>
    <dbReference type="NCBI Taxonomy" id="395019"/>
    <lineage>
        <taxon>Bacteria</taxon>
        <taxon>Pseudomonadati</taxon>
        <taxon>Pseudomonadota</taxon>
        <taxon>Betaproteobacteria</taxon>
        <taxon>Burkholderiales</taxon>
        <taxon>Burkholderiaceae</taxon>
        <taxon>Burkholderia</taxon>
        <taxon>Burkholderia cepacia complex</taxon>
    </lineage>
</organism>
<comment type="function">
    <text evidence="1">Catalyzes the ATP- as well as the pyrophosphate-dependent phosphorylation of a specific serine residue in HPr, a phosphocarrier protein of the phosphoenolpyruvate-dependent sugar phosphotransferase system (PTS). HprK/P also catalyzes the pyrophosphate-producing, inorganic phosphate-dependent dephosphorylation (phosphorolysis) of seryl-phosphorylated HPr (P-Ser-HPr).</text>
</comment>
<comment type="catalytic activity">
    <reaction evidence="1">
        <text>[HPr protein]-L-serine + ATP = [HPr protein]-O-phospho-L-serine + ADP + H(+)</text>
        <dbReference type="Rhea" id="RHEA:46600"/>
        <dbReference type="Rhea" id="RHEA-COMP:11602"/>
        <dbReference type="Rhea" id="RHEA-COMP:11603"/>
        <dbReference type="ChEBI" id="CHEBI:15378"/>
        <dbReference type="ChEBI" id="CHEBI:29999"/>
        <dbReference type="ChEBI" id="CHEBI:30616"/>
        <dbReference type="ChEBI" id="CHEBI:83421"/>
        <dbReference type="ChEBI" id="CHEBI:456216"/>
    </reaction>
</comment>
<comment type="catalytic activity">
    <reaction evidence="1">
        <text>[HPr protein]-O-phospho-L-serine + phosphate + H(+) = [HPr protein]-L-serine + diphosphate</text>
        <dbReference type="Rhea" id="RHEA:46604"/>
        <dbReference type="Rhea" id="RHEA-COMP:11602"/>
        <dbReference type="Rhea" id="RHEA-COMP:11603"/>
        <dbReference type="ChEBI" id="CHEBI:15378"/>
        <dbReference type="ChEBI" id="CHEBI:29999"/>
        <dbReference type="ChEBI" id="CHEBI:33019"/>
        <dbReference type="ChEBI" id="CHEBI:43474"/>
        <dbReference type="ChEBI" id="CHEBI:83421"/>
    </reaction>
</comment>
<comment type="cofactor">
    <cofactor evidence="1">
        <name>Mg(2+)</name>
        <dbReference type="ChEBI" id="CHEBI:18420"/>
    </cofactor>
</comment>
<comment type="subunit">
    <text evidence="1">Homohexamer.</text>
</comment>
<comment type="domain">
    <text evidence="1">The Walker A ATP-binding motif also binds Pi and PPi.</text>
</comment>
<comment type="miscellaneous">
    <text evidence="1">Both phosphorylation and phosphorolysis are carried out by the same active site and suggest a common mechanism for both reactions.</text>
</comment>
<comment type="similarity">
    <text evidence="1">Belongs to the HPrK/P family.</text>
</comment>
<sequence>MDTSSINAQSIFDDNAATLKLSWLTGHEGWERGFSADTVANATSSADLVGHLNLIHPNRIQVLGEAEIDYYQRQTDEDRSRHMAELIALEPPFLVVAGGAAAPPELVLRCTRSSTPLFTTPMSAAAVIDSLRLYMSRILAPRATLHGVFLDILGMGVLLTGDSGLGKSELGLELISRGHGLVADDAVDFVRLGPDFVEGRCPPLLQNLLEVRGLGLLDIKTIFGETAVRRKMKLKLIVQLVRRPDGEFQRLPLESQTVDVLGLPISKVTIQVAAGRNLAVLVEAAVRNTILQLRGIDTLRDFMDRQRLAMQDPESQFPGKLV</sequence>
<proteinExistence type="inferred from homology"/>
<reference key="1">
    <citation type="submission" date="2007-10" db="EMBL/GenBank/DDBJ databases">
        <title>Complete sequence of chromosome 1 of Burkholderia multivorans ATCC 17616.</title>
        <authorList>
            <person name="Copeland A."/>
            <person name="Lucas S."/>
            <person name="Lapidus A."/>
            <person name="Barry K."/>
            <person name="Glavina del Rio T."/>
            <person name="Dalin E."/>
            <person name="Tice H."/>
            <person name="Pitluck S."/>
            <person name="Chain P."/>
            <person name="Malfatti S."/>
            <person name="Shin M."/>
            <person name="Vergez L."/>
            <person name="Schmutz J."/>
            <person name="Larimer F."/>
            <person name="Land M."/>
            <person name="Hauser L."/>
            <person name="Kyrpides N."/>
            <person name="Kim E."/>
            <person name="Tiedje J."/>
            <person name="Richardson P."/>
        </authorList>
    </citation>
    <scope>NUCLEOTIDE SEQUENCE [LARGE SCALE GENOMIC DNA]</scope>
    <source>
        <strain>ATCC 17616 / 249</strain>
    </source>
</reference>
<reference key="2">
    <citation type="submission" date="2007-04" db="EMBL/GenBank/DDBJ databases">
        <title>Complete genome sequence of Burkholderia multivorans ATCC 17616.</title>
        <authorList>
            <person name="Ohtsubo Y."/>
            <person name="Yamashita A."/>
            <person name="Kurokawa K."/>
            <person name="Takami H."/>
            <person name="Yuhara S."/>
            <person name="Nishiyama E."/>
            <person name="Endo R."/>
            <person name="Miyazaki R."/>
            <person name="Ono A."/>
            <person name="Yano K."/>
            <person name="Ito M."/>
            <person name="Sota M."/>
            <person name="Yuji N."/>
            <person name="Hattori M."/>
            <person name="Tsuda M."/>
        </authorList>
    </citation>
    <scope>NUCLEOTIDE SEQUENCE [LARGE SCALE GENOMIC DNA]</scope>
    <source>
        <strain>ATCC 17616 / 249</strain>
    </source>
</reference>
<protein>
    <recommendedName>
        <fullName evidence="1">HPr kinase/phosphorylase</fullName>
        <shortName evidence="1">HPrK/P</shortName>
        <ecNumber evidence="1">2.7.11.-</ecNumber>
        <ecNumber evidence="1">2.7.4.-</ecNumber>
    </recommendedName>
    <alternativeName>
        <fullName evidence="1">HPr(Ser) kinase/phosphorylase</fullName>
    </alternativeName>
</protein>
<feature type="chain" id="PRO_1000139891" description="HPr kinase/phosphorylase">
    <location>
        <begin position="1"/>
        <end position="322"/>
    </location>
</feature>
<feature type="region of interest" description="Important for the catalytic mechanism of both phosphorylation and dephosphorylation" evidence="1">
    <location>
        <begin position="209"/>
        <end position="218"/>
    </location>
</feature>
<feature type="region of interest" description="Important for the catalytic mechanism of dephosphorylation" evidence="1">
    <location>
        <begin position="271"/>
        <end position="276"/>
    </location>
</feature>
<feature type="active site" evidence="1">
    <location>
        <position position="146"/>
    </location>
</feature>
<feature type="active site" evidence="1">
    <location>
        <position position="167"/>
    </location>
</feature>
<feature type="active site" description="Proton acceptor; for phosphorylation activity. Proton donor; for dephosphorylation activity" evidence="1">
    <location>
        <position position="185"/>
    </location>
</feature>
<feature type="active site" evidence="1">
    <location>
        <position position="250"/>
    </location>
</feature>
<feature type="binding site" evidence="1">
    <location>
        <begin position="161"/>
        <end position="168"/>
    </location>
    <ligand>
        <name>ATP</name>
        <dbReference type="ChEBI" id="CHEBI:30616"/>
    </ligand>
</feature>
<feature type="binding site" evidence="1">
    <location>
        <position position="168"/>
    </location>
    <ligand>
        <name>Mg(2+)</name>
        <dbReference type="ChEBI" id="CHEBI:18420"/>
    </ligand>
</feature>
<feature type="binding site" evidence="1">
    <location>
        <position position="210"/>
    </location>
    <ligand>
        <name>Mg(2+)</name>
        <dbReference type="ChEBI" id="CHEBI:18420"/>
    </ligand>
</feature>
<gene>
    <name evidence="1" type="primary">hprK</name>
    <name type="ordered locus">Bmul_0521</name>
    <name type="ordered locus">BMULJ_02738</name>
</gene>
<name>HPRK_BURM1</name>
<accession>A9AEZ6</accession>
<dbReference type="EC" id="2.7.11.-" evidence="1"/>
<dbReference type="EC" id="2.7.4.-" evidence="1"/>
<dbReference type="EMBL" id="CP000868">
    <property type="protein sequence ID" value="ABX14216.1"/>
    <property type="molecule type" value="Genomic_DNA"/>
</dbReference>
<dbReference type="EMBL" id="AP009385">
    <property type="protein sequence ID" value="BAG44627.1"/>
    <property type="molecule type" value="Genomic_DNA"/>
</dbReference>
<dbReference type="RefSeq" id="WP_006398252.1">
    <property type="nucleotide sequence ID" value="NC_010804.1"/>
</dbReference>
<dbReference type="SMR" id="A9AEZ6"/>
<dbReference type="STRING" id="395019.BMULJ_02738"/>
<dbReference type="GeneID" id="89571324"/>
<dbReference type="KEGG" id="bmj:BMULJ_02738"/>
<dbReference type="KEGG" id="bmu:Bmul_0521"/>
<dbReference type="eggNOG" id="COG1493">
    <property type="taxonomic scope" value="Bacteria"/>
</dbReference>
<dbReference type="HOGENOM" id="CLU_052030_0_2_4"/>
<dbReference type="Proteomes" id="UP000008815">
    <property type="component" value="Chromosome 1"/>
</dbReference>
<dbReference type="GO" id="GO:0005524">
    <property type="term" value="F:ATP binding"/>
    <property type="evidence" value="ECO:0007669"/>
    <property type="project" value="UniProtKB-UniRule"/>
</dbReference>
<dbReference type="GO" id="GO:0000287">
    <property type="term" value="F:magnesium ion binding"/>
    <property type="evidence" value="ECO:0007669"/>
    <property type="project" value="UniProtKB-UniRule"/>
</dbReference>
<dbReference type="GO" id="GO:0000155">
    <property type="term" value="F:phosphorelay sensor kinase activity"/>
    <property type="evidence" value="ECO:0007669"/>
    <property type="project" value="InterPro"/>
</dbReference>
<dbReference type="GO" id="GO:0004674">
    <property type="term" value="F:protein serine/threonine kinase activity"/>
    <property type="evidence" value="ECO:0007669"/>
    <property type="project" value="UniProtKB-KW"/>
</dbReference>
<dbReference type="GO" id="GO:0004712">
    <property type="term" value="F:protein serine/threonine/tyrosine kinase activity"/>
    <property type="evidence" value="ECO:0007669"/>
    <property type="project" value="UniProtKB-UniRule"/>
</dbReference>
<dbReference type="GO" id="GO:0006109">
    <property type="term" value="P:regulation of carbohydrate metabolic process"/>
    <property type="evidence" value="ECO:0007669"/>
    <property type="project" value="UniProtKB-UniRule"/>
</dbReference>
<dbReference type="CDD" id="cd01918">
    <property type="entry name" value="HprK_C"/>
    <property type="match status" value="1"/>
</dbReference>
<dbReference type="FunFam" id="3.40.50.300:FF:000174">
    <property type="entry name" value="HPr kinase/phosphorylase"/>
    <property type="match status" value="1"/>
</dbReference>
<dbReference type="Gene3D" id="3.40.1390.20">
    <property type="entry name" value="HprK N-terminal domain-like"/>
    <property type="match status" value="1"/>
</dbReference>
<dbReference type="Gene3D" id="3.40.50.300">
    <property type="entry name" value="P-loop containing nucleotide triphosphate hydrolases"/>
    <property type="match status" value="1"/>
</dbReference>
<dbReference type="HAMAP" id="MF_01249">
    <property type="entry name" value="HPr_kinase"/>
    <property type="match status" value="1"/>
</dbReference>
<dbReference type="InterPro" id="IPR003755">
    <property type="entry name" value="HPr(Ser)_kin/Pase"/>
</dbReference>
<dbReference type="InterPro" id="IPR011104">
    <property type="entry name" value="Hpr_kin/Pase_C"/>
</dbReference>
<dbReference type="InterPro" id="IPR011126">
    <property type="entry name" value="Hpr_kin/Pase_Hpr_N"/>
</dbReference>
<dbReference type="InterPro" id="IPR027417">
    <property type="entry name" value="P-loop_NTPase"/>
</dbReference>
<dbReference type="InterPro" id="IPR028979">
    <property type="entry name" value="Ser_kin/Pase_Hpr-like_N_sf"/>
</dbReference>
<dbReference type="NCBIfam" id="TIGR00679">
    <property type="entry name" value="hpr-ser"/>
    <property type="match status" value="1"/>
</dbReference>
<dbReference type="PANTHER" id="PTHR30305:SF1">
    <property type="entry name" value="HPR KINASE_PHOSPHORYLASE"/>
    <property type="match status" value="1"/>
</dbReference>
<dbReference type="PANTHER" id="PTHR30305">
    <property type="entry name" value="PROTEIN YJDM-RELATED"/>
    <property type="match status" value="1"/>
</dbReference>
<dbReference type="Pfam" id="PF07475">
    <property type="entry name" value="Hpr_kinase_C"/>
    <property type="match status" value="1"/>
</dbReference>
<dbReference type="Pfam" id="PF02603">
    <property type="entry name" value="Hpr_kinase_N"/>
    <property type="match status" value="1"/>
</dbReference>
<dbReference type="SUPFAM" id="SSF75138">
    <property type="entry name" value="HprK N-terminal domain-like"/>
    <property type="match status" value="1"/>
</dbReference>
<dbReference type="SUPFAM" id="SSF53795">
    <property type="entry name" value="PEP carboxykinase-like"/>
    <property type="match status" value="1"/>
</dbReference>
<evidence type="ECO:0000255" key="1">
    <source>
        <dbReference type="HAMAP-Rule" id="MF_01249"/>
    </source>
</evidence>